<protein>
    <recommendedName>
        <fullName evidence="1">Queuine tRNA-ribosyltransferase</fullName>
        <ecNumber evidence="1">2.4.2.29</ecNumber>
    </recommendedName>
    <alternativeName>
        <fullName evidence="1">Guanine insertion enzyme</fullName>
    </alternativeName>
    <alternativeName>
        <fullName evidence="1">tRNA-guanine transglycosylase</fullName>
    </alternativeName>
</protein>
<dbReference type="EC" id="2.4.2.29" evidence="1"/>
<dbReference type="EMBL" id="CP000282">
    <property type="protein sequence ID" value="ABD80668.1"/>
    <property type="molecule type" value="Genomic_DNA"/>
</dbReference>
<dbReference type="RefSeq" id="WP_011467888.1">
    <property type="nucleotide sequence ID" value="NC_007912.1"/>
</dbReference>
<dbReference type="SMR" id="Q21KW1"/>
<dbReference type="STRING" id="203122.Sde_1406"/>
<dbReference type="GeneID" id="98613081"/>
<dbReference type="KEGG" id="sde:Sde_1406"/>
<dbReference type="eggNOG" id="COG0343">
    <property type="taxonomic scope" value="Bacteria"/>
</dbReference>
<dbReference type="HOGENOM" id="CLU_022060_0_1_6"/>
<dbReference type="OrthoDB" id="9805417at2"/>
<dbReference type="UniPathway" id="UPA00392"/>
<dbReference type="Proteomes" id="UP000001947">
    <property type="component" value="Chromosome"/>
</dbReference>
<dbReference type="GO" id="GO:0005829">
    <property type="term" value="C:cytosol"/>
    <property type="evidence" value="ECO:0007669"/>
    <property type="project" value="TreeGrafter"/>
</dbReference>
<dbReference type="GO" id="GO:0046872">
    <property type="term" value="F:metal ion binding"/>
    <property type="evidence" value="ECO:0007669"/>
    <property type="project" value="UniProtKB-KW"/>
</dbReference>
<dbReference type="GO" id="GO:0008479">
    <property type="term" value="F:tRNA-guanosine(34) queuine transglycosylase activity"/>
    <property type="evidence" value="ECO:0007669"/>
    <property type="project" value="UniProtKB-UniRule"/>
</dbReference>
<dbReference type="GO" id="GO:0008616">
    <property type="term" value="P:queuosine biosynthetic process"/>
    <property type="evidence" value="ECO:0007669"/>
    <property type="project" value="UniProtKB-UniRule"/>
</dbReference>
<dbReference type="GO" id="GO:0002099">
    <property type="term" value="P:tRNA wobble guanine modification"/>
    <property type="evidence" value="ECO:0007669"/>
    <property type="project" value="TreeGrafter"/>
</dbReference>
<dbReference type="GO" id="GO:0101030">
    <property type="term" value="P:tRNA-guanine transglycosylation"/>
    <property type="evidence" value="ECO:0007669"/>
    <property type="project" value="InterPro"/>
</dbReference>
<dbReference type="FunFam" id="3.20.20.105:FF:000001">
    <property type="entry name" value="Queuine tRNA-ribosyltransferase"/>
    <property type="match status" value="1"/>
</dbReference>
<dbReference type="Gene3D" id="3.20.20.105">
    <property type="entry name" value="Queuine tRNA-ribosyltransferase-like"/>
    <property type="match status" value="1"/>
</dbReference>
<dbReference type="HAMAP" id="MF_00168">
    <property type="entry name" value="Q_tRNA_Tgt"/>
    <property type="match status" value="1"/>
</dbReference>
<dbReference type="InterPro" id="IPR050076">
    <property type="entry name" value="ArchSynthase1/Queuine_TRR"/>
</dbReference>
<dbReference type="InterPro" id="IPR004803">
    <property type="entry name" value="TGT"/>
</dbReference>
<dbReference type="InterPro" id="IPR036511">
    <property type="entry name" value="TGT-like_sf"/>
</dbReference>
<dbReference type="InterPro" id="IPR002616">
    <property type="entry name" value="tRNA_ribo_trans-like"/>
</dbReference>
<dbReference type="NCBIfam" id="TIGR00430">
    <property type="entry name" value="Q_tRNA_tgt"/>
    <property type="match status" value="1"/>
</dbReference>
<dbReference type="NCBIfam" id="TIGR00449">
    <property type="entry name" value="tgt_general"/>
    <property type="match status" value="1"/>
</dbReference>
<dbReference type="PANTHER" id="PTHR46499">
    <property type="entry name" value="QUEUINE TRNA-RIBOSYLTRANSFERASE"/>
    <property type="match status" value="1"/>
</dbReference>
<dbReference type="PANTHER" id="PTHR46499:SF1">
    <property type="entry name" value="QUEUINE TRNA-RIBOSYLTRANSFERASE"/>
    <property type="match status" value="1"/>
</dbReference>
<dbReference type="Pfam" id="PF01702">
    <property type="entry name" value="TGT"/>
    <property type="match status" value="1"/>
</dbReference>
<dbReference type="SUPFAM" id="SSF51713">
    <property type="entry name" value="tRNA-guanine transglycosylase"/>
    <property type="match status" value="1"/>
</dbReference>
<organism>
    <name type="scientific">Saccharophagus degradans (strain 2-40 / ATCC 43961 / DSM 17024)</name>
    <dbReference type="NCBI Taxonomy" id="203122"/>
    <lineage>
        <taxon>Bacteria</taxon>
        <taxon>Pseudomonadati</taxon>
        <taxon>Pseudomonadota</taxon>
        <taxon>Gammaproteobacteria</taxon>
        <taxon>Cellvibrionales</taxon>
        <taxon>Cellvibrionaceae</taxon>
        <taxon>Saccharophagus</taxon>
    </lineage>
</organism>
<gene>
    <name evidence="1" type="primary">tgt</name>
    <name type="ordered locus">Sde_1406</name>
</gene>
<comment type="function">
    <text evidence="1">Catalyzes the base-exchange of a guanine (G) residue with the queuine precursor 7-aminomethyl-7-deazaguanine (PreQ1) at position 34 (anticodon wobble position) in tRNAs with GU(N) anticodons (tRNA-Asp, -Asn, -His and -Tyr). Catalysis occurs through a double-displacement mechanism. The nucleophile active site attacks the C1' of nucleotide 34 to detach the guanine base from the RNA, forming a covalent enzyme-RNA intermediate. The proton acceptor active site deprotonates the incoming PreQ1, allowing a nucleophilic attack on the C1' of the ribose to form the product. After dissociation, two additional enzymatic reactions on the tRNA convert PreQ1 to queuine (Q), resulting in the hypermodified nucleoside queuosine (7-(((4,5-cis-dihydroxy-2-cyclopenten-1-yl)amino)methyl)-7-deazaguanosine).</text>
</comment>
<comment type="catalytic activity">
    <reaction evidence="1">
        <text>7-aminomethyl-7-carbaguanine + guanosine(34) in tRNA = 7-aminomethyl-7-carbaguanosine(34) in tRNA + guanine</text>
        <dbReference type="Rhea" id="RHEA:24104"/>
        <dbReference type="Rhea" id="RHEA-COMP:10341"/>
        <dbReference type="Rhea" id="RHEA-COMP:10342"/>
        <dbReference type="ChEBI" id="CHEBI:16235"/>
        <dbReference type="ChEBI" id="CHEBI:58703"/>
        <dbReference type="ChEBI" id="CHEBI:74269"/>
        <dbReference type="ChEBI" id="CHEBI:82833"/>
        <dbReference type="EC" id="2.4.2.29"/>
    </reaction>
</comment>
<comment type="cofactor">
    <cofactor evidence="1">
        <name>Zn(2+)</name>
        <dbReference type="ChEBI" id="CHEBI:29105"/>
    </cofactor>
    <text evidence="1">Binds 1 zinc ion per subunit.</text>
</comment>
<comment type="pathway">
    <text evidence="1">tRNA modification; tRNA-queuosine biosynthesis.</text>
</comment>
<comment type="subunit">
    <text evidence="1">Homodimer. Within each dimer, one monomer is responsible for RNA recognition and catalysis, while the other monomer binds to the replacement base PreQ1.</text>
</comment>
<comment type="similarity">
    <text evidence="1">Belongs to the queuine tRNA-ribosyltransferase family.</text>
</comment>
<keyword id="KW-0328">Glycosyltransferase</keyword>
<keyword id="KW-0479">Metal-binding</keyword>
<keyword id="KW-0671">Queuosine biosynthesis</keyword>
<keyword id="KW-1185">Reference proteome</keyword>
<keyword id="KW-0808">Transferase</keyword>
<keyword id="KW-0819">tRNA processing</keyword>
<keyword id="KW-0862">Zinc</keyword>
<evidence type="ECO:0000255" key="1">
    <source>
        <dbReference type="HAMAP-Rule" id="MF_00168"/>
    </source>
</evidence>
<name>TGT_SACD2</name>
<feature type="chain" id="PRO_1000016841" description="Queuine tRNA-ribosyltransferase">
    <location>
        <begin position="1"/>
        <end position="374"/>
    </location>
</feature>
<feature type="region of interest" description="RNA binding" evidence="1">
    <location>
        <begin position="243"/>
        <end position="249"/>
    </location>
</feature>
<feature type="region of interest" description="RNA binding; important for wobble base 34 recognition" evidence="1">
    <location>
        <begin position="267"/>
        <end position="271"/>
    </location>
</feature>
<feature type="active site" description="Proton acceptor" evidence="1">
    <location>
        <position position="89"/>
    </location>
</feature>
<feature type="active site" description="Nucleophile" evidence="1">
    <location>
        <position position="262"/>
    </location>
</feature>
<feature type="binding site" evidence="1">
    <location>
        <begin position="89"/>
        <end position="93"/>
    </location>
    <ligand>
        <name>substrate</name>
    </ligand>
</feature>
<feature type="binding site" evidence="1">
    <location>
        <position position="143"/>
    </location>
    <ligand>
        <name>substrate</name>
    </ligand>
</feature>
<feature type="binding site" evidence="1">
    <location>
        <position position="185"/>
    </location>
    <ligand>
        <name>substrate</name>
    </ligand>
</feature>
<feature type="binding site" evidence="1">
    <location>
        <position position="212"/>
    </location>
    <ligand>
        <name>substrate</name>
    </ligand>
</feature>
<feature type="binding site" evidence="1">
    <location>
        <position position="300"/>
    </location>
    <ligand>
        <name>Zn(2+)</name>
        <dbReference type="ChEBI" id="CHEBI:29105"/>
    </ligand>
</feature>
<feature type="binding site" evidence="1">
    <location>
        <position position="302"/>
    </location>
    <ligand>
        <name>Zn(2+)</name>
        <dbReference type="ChEBI" id="CHEBI:29105"/>
    </ligand>
</feature>
<feature type="binding site" evidence="1">
    <location>
        <position position="305"/>
    </location>
    <ligand>
        <name>Zn(2+)</name>
        <dbReference type="ChEBI" id="CHEBI:29105"/>
    </ligand>
</feature>
<feature type="binding site" evidence="1">
    <location>
        <position position="331"/>
    </location>
    <ligand>
        <name>Zn(2+)</name>
        <dbReference type="ChEBI" id="CHEBI:29105"/>
    </ligand>
</feature>
<reference key="1">
    <citation type="journal article" date="2008" name="PLoS Genet.">
        <title>Complete genome sequence of the complex carbohydrate-degrading marine bacterium, Saccharophagus degradans strain 2-40 T.</title>
        <authorList>
            <person name="Weiner R.M."/>
            <person name="Taylor L.E. II"/>
            <person name="Henrissat B."/>
            <person name="Hauser L."/>
            <person name="Land M."/>
            <person name="Coutinho P.M."/>
            <person name="Rancurel C."/>
            <person name="Saunders E.H."/>
            <person name="Longmire A.G."/>
            <person name="Zhang H."/>
            <person name="Bayer E.A."/>
            <person name="Gilbert H.J."/>
            <person name="Larimer F."/>
            <person name="Zhulin I.B."/>
            <person name="Ekborg N.A."/>
            <person name="Lamed R."/>
            <person name="Richardson P.M."/>
            <person name="Borovok I."/>
            <person name="Hutcheson S."/>
        </authorList>
    </citation>
    <scope>NUCLEOTIDE SEQUENCE [LARGE SCALE GENOMIC DNA]</scope>
    <source>
        <strain>2-40 / ATCC 43961 / DSM 17024</strain>
    </source>
</reference>
<accession>Q21KW1</accession>
<sequence length="374" mass="41409">MKFELTTTDGDARRGQLTFSRGTVQTPAFMPVGTYGTVKGMLPRDIVDSGAEIILGNTFHLMLRPGTEVVKAHGDLHDFIQWQGPILTDSGGFQVFSLGDMRKISEEGVKFRSPIDGSEVFLDPEKAMQVQRDLGSDIVMIFDECTPYPATVHEARVSMELSLRWAKRSKDAHGDNPSALFGIVQGGMHESLRSESLKGLTEIGFDGYAIGGLSVGEPKEDMLRILNHLKTEMPADKPRYLMGVGKPEDLVEGVCRGIDMFDCVMPTRNARNGHLFTQAGVVKIRNAKHRHDTGPLDPTCDCYTCQNFSRAYLHHLDKCGEILGAQLNTIHNLRHYQTVMSELRAAIGKGELAQYVSHFYARQGKERPAIATQS</sequence>
<proteinExistence type="inferred from homology"/>